<reference key="1">
    <citation type="journal article" date="2003" name="Nature">
        <title>Genome sequence of Bacillus cereus and comparative analysis with Bacillus anthracis.</title>
        <authorList>
            <person name="Ivanova N."/>
            <person name="Sorokin A."/>
            <person name="Anderson I."/>
            <person name="Galleron N."/>
            <person name="Candelon B."/>
            <person name="Kapatral V."/>
            <person name="Bhattacharyya A."/>
            <person name="Reznik G."/>
            <person name="Mikhailova N."/>
            <person name="Lapidus A."/>
            <person name="Chu L."/>
            <person name="Mazur M."/>
            <person name="Goltsman E."/>
            <person name="Larsen N."/>
            <person name="D'Souza M."/>
            <person name="Walunas T."/>
            <person name="Grechkin Y."/>
            <person name="Pusch G."/>
            <person name="Haselkorn R."/>
            <person name="Fonstein M."/>
            <person name="Ehrlich S.D."/>
            <person name="Overbeek R."/>
            <person name="Kyrpides N.C."/>
        </authorList>
    </citation>
    <scope>NUCLEOTIDE SEQUENCE [LARGE SCALE GENOMIC DNA]</scope>
    <source>
        <strain>ATCC 14579 / DSM 31 / CCUG 7414 / JCM 2152 / NBRC 15305 / NCIMB 9373 / NCTC 2599 / NRRL B-3711</strain>
    </source>
</reference>
<feature type="chain" id="PRO_0000213001" description="UPF0340 protein BC_5317">
    <location>
        <begin position="1"/>
        <end position="190"/>
    </location>
</feature>
<dbReference type="EMBL" id="AE016877">
    <property type="protein sequence ID" value="AAP12180.1"/>
    <property type="status" value="ALT_INIT"/>
    <property type="molecule type" value="Genomic_DNA"/>
</dbReference>
<dbReference type="RefSeq" id="NP_834979.1">
    <property type="nucleotide sequence ID" value="NC_004722.1"/>
</dbReference>
<dbReference type="RefSeq" id="WP_000136374.1">
    <property type="nucleotide sequence ID" value="NC_004722.1"/>
</dbReference>
<dbReference type="SMR" id="Q814V1"/>
<dbReference type="STRING" id="226900.BC_5317"/>
<dbReference type="KEGG" id="bce:BC5317"/>
<dbReference type="PATRIC" id="fig|226900.8.peg.5490"/>
<dbReference type="HOGENOM" id="CLU_106658_0_0_9"/>
<dbReference type="OrthoDB" id="9803187at2"/>
<dbReference type="Proteomes" id="UP000001417">
    <property type="component" value="Chromosome"/>
</dbReference>
<dbReference type="Gene3D" id="3.40.50.10360">
    <property type="entry name" value="Hypothetical protein TT1679"/>
    <property type="match status" value="1"/>
</dbReference>
<dbReference type="HAMAP" id="MF_00800">
    <property type="entry name" value="UPF0340"/>
    <property type="match status" value="1"/>
</dbReference>
<dbReference type="InterPro" id="IPR028345">
    <property type="entry name" value="Antibiotic_NAT-like"/>
</dbReference>
<dbReference type="InterPro" id="IPR006340">
    <property type="entry name" value="DUF436"/>
</dbReference>
<dbReference type="NCBIfam" id="TIGR01440">
    <property type="entry name" value="TIGR01440 family protein"/>
    <property type="match status" value="1"/>
</dbReference>
<dbReference type="Pfam" id="PF04260">
    <property type="entry name" value="DUF436"/>
    <property type="match status" value="1"/>
</dbReference>
<dbReference type="PIRSF" id="PIRSF007510">
    <property type="entry name" value="UCP007510"/>
    <property type="match status" value="1"/>
</dbReference>
<dbReference type="SUPFAM" id="SSF110710">
    <property type="entry name" value="TTHA0583/YokD-like"/>
    <property type="match status" value="1"/>
</dbReference>
<proteinExistence type="inferred from homology"/>
<protein>
    <recommendedName>
        <fullName evidence="1">UPF0340 protein BC_5317</fullName>
    </recommendedName>
</protein>
<gene>
    <name type="ordered locus">BC_5317</name>
</gene>
<evidence type="ECO:0000255" key="1">
    <source>
        <dbReference type="HAMAP-Rule" id="MF_00800"/>
    </source>
</evidence>
<evidence type="ECO:0000305" key="2"/>
<organism>
    <name type="scientific">Bacillus cereus (strain ATCC 14579 / DSM 31 / CCUG 7414 / JCM 2152 / NBRC 15305 / NCIMB 9373 / NCTC 2599 / NRRL B-3711)</name>
    <dbReference type="NCBI Taxonomy" id="226900"/>
    <lineage>
        <taxon>Bacteria</taxon>
        <taxon>Bacillati</taxon>
        <taxon>Bacillota</taxon>
        <taxon>Bacilli</taxon>
        <taxon>Bacillales</taxon>
        <taxon>Bacillaceae</taxon>
        <taxon>Bacillus</taxon>
        <taxon>Bacillus cereus group</taxon>
    </lineage>
</organism>
<keyword id="KW-1185">Reference proteome</keyword>
<comment type="similarity">
    <text evidence="1">Belongs to the UPF0340 family.</text>
</comment>
<comment type="sequence caution" evidence="2">
    <conflict type="erroneous initiation">
        <sequence resource="EMBL-CDS" id="AAP12180"/>
    </conflict>
</comment>
<name>Y5317_BACCR</name>
<sequence>MTEIVKVREQLQMSLSDFQEQASLQSGQIFVVGCSTSEVLGERIGTSGTMEVAEAIFSELKQFQEQTGIELAFQCCEHLNRALVVEREVAIKYQFEIVTVTPVRSAGGALGTYAYHNLKDPVVVEFIKADAGMDIGDTFIGMHLKHVAVPVRTNVKEIGSAHVTMAKTRGKLIGGARAVYAAVEETTTCR</sequence>
<accession>Q814V1</accession>